<dbReference type="EMBL" id="CY006697">
    <property type="protein sequence ID" value="ABB96328.1"/>
    <property type="molecule type" value="Genomic_RNA"/>
</dbReference>
<dbReference type="SMR" id="Q2VNE4"/>
<dbReference type="Proteomes" id="UP000007555">
    <property type="component" value="Genome"/>
</dbReference>
<dbReference type="GO" id="GO:0044164">
    <property type="term" value="C:host cell cytosol"/>
    <property type="evidence" value="ECO:0007669"/>
    <property type="project" value="UniProtKB-SubCell"/>
</dbReference>
<dbReference type="GO" id="GO:0044192">
    <property type="term" value="C:host cell mitochondrial inner membrane"/>
    <property type="evidence" value="ECO:0007669"/>
    <property type="project" value="UniProtKB-SubCell"/>
</dbReference>
<dbReference type="GO" id="GO:0042025">
    <property type="term" value="C:host cell nucleus"/>
    <property type="evidence" value="ECO:0007669"/>
    <property type="project" value="UniProtKB-SubCell"/>
</dbReference>
<dbReference type="GO" id="GO:0016020">
    <property type="term" value="C:membrane"/>
    <property type="evidence" value="ECO:0007669"/>
    <property type="project" value="UniProtKB-UniRule"/>
</dbReference>
<dbReference type="GO" id="GO:0052150">
    <property type="term" value="P:symbiont-mediated perturbation of host apoptosis"/>
    <property type="evidence" value="ECO:0007669"/>
    <property type="project" value="UniProtKB-KW"/>
</dbReference>
<dbReference type="GO" id="GO:0039545">
    <property type="term" value="P:symbiont-mediated suppression of host cytoplasmic pattern recognition receptor signaling pathway via inhibition of MAVS activity"/>
    <property type="evidence" value="ECO:0007669"/>
    <property type="project" value="UniProtKB-KW"/>
</dbReference>
<dbReference type="HAMAP" id="MF_04064">
    <property type="entry name" value="INFV_PB1F2"/>
    <property type="match status" value="1"/>
</dbReference>
<dbReference type="InterPro" id="IPR021045">
    <property type="entry name" value="Flu_proapoptotic_PB1-F2"/>
</dbReference>
<dbReference type="Pfam" id="PF11986">
    <property type="entry name" value="PB1-F2"/>
    <property type="match status" value="1"/>
</dbReference>
<keyword id="KW-0053">Apoptosis</keyword>
<keyword id="KW-1035">Host cytoplasm</keyword>
<keyword id="KW-1043">Host membrane</keyword>
<keyword id="KW-1045">Host mitochondrion</keyword>
<keyword id="KW-1046">Host mitochondrion inner membrane</keyword>
<keyword id="KW-1048">Host nucleus</keyword>
<keyword id="KW-0945">Host-virus interaction</keyword>
<keyword id="KW-1090">Inhibition of host innate immune response by virus</keyword>
<keyword id="KW-1097">Inhibition of host MAVS by virus</keyword>
<keyword id="KW-1113">Inhibition of host RLR pathway by virus</keyword>
<keyword id="KW-0472">Membrane</keyword>
<keyword id="KW-1119">Modulation of host cell apoptosis by virus</keyword>
<keyword id="KW-0899">Viral immunoevasion</keyword>
<protein>
    <recommendedName>
        <fullName evidence="1">Protein PB1-F2</fullName>
    </recommendedName>
</protein>
<reference key="1">
    <citation type="submission" date="2005-12" db="EMBL/GenBank/DDBJ databases">
        <title>The NIAID influenza genome sequencing project.</title>
        <authorList>
            <person name="Ghedin E."/>
            <person name="Spiro D."/>
            <person name="Miller N."/>
            <person name="Zaborsky J."/>
            <person name="Feldblyum T."/>
            <person name="Subbu V."/>
            <person name="Shumway M."/>
            <person name="Sparenborg J."/>
            <person name="Groveman L."/>
            <person name="Halpin R."/>
            <person name="Sitz J."/>
            <person name="Koo H."/>
            <person name="Salzberg S.L."/>
            <person name="Webster R.G."/>
            <person name="Hoffmann E."/>
            <person name="Krauss S."/>
            <person name="Naeve C."/>
            <person name="Bao Y."/>
            <person name="Bolotov P."/>
            <person name="Dernovoy D."/>
            <person name="Kiryutin B."/>
            <person name="Lipman D.J."/>
            <person name="Tatusova T."/>
        </authorList>
    </citation>
    <scope>NUCLEOTIDE SEQUENCE [GENOMIC RNA]</scope>
</reference>
<proteinExistence type="inferred from homology"/>
<sequence>MEQEQDTPWTQLTEHINIQKKGNGQQTQKLGRPNLTRLMDHYLRIMSQVDMHKQTVSWKLWLSLRNPTQGSLKTRALKQWKSFNKQEWTD</sequence>
<evidence type="ECO:0000255" key="1">
    <source>
        <dbReference type="HAMAP-Rule" id="MF_04064"/>
    </source>
</evidence>
<evidence type="ECO:0000256" key="2">
    <source>
        <dbReference type="SAM" id="MobiDB-lite"/>
    </source>
</evidence>
<gene>
    <name evidence="1" type="primary">PB1</name>
</gene>
<organismHost>
    <name type="scientific">Aves</name>
    <dbReference type="NCBI Taxonomy" id="8782"/>
</organismHost>
<organismHost>
    <name type="scientific">Cetacea</name>
    <name type="common">whales</name>
    <dbReference type="NCBI Taxonomy" id="9721"/>
</organismHost>
<organismHost>
    <name type="scientific">Homo sapiens</name>
    <name type="common">Human</name>
    <dbReference type="NCBI Taxonomy" id="9606"/>
</organismHost>
<organismHost>
    <name type="scientific">Phocidae</name>
    <name type="common">true seals</name>
    <dbReference type="NCBI Taxonomy" id="9709"/>
</organismHost>
<organismHost>
    <name type="scientific">Sus scrofa</name>
    <name type="common">Pig</name>
    <dbReference type="NCBI Taxonomy" id="9823"/>
</organismHost>
<organism>
    <name type="scientific">Influenza A virus (strain A/Memphis/2/1978 H3N2)</name>
    <dbReference type="NCBI Taxonomy" id="383580"/>
    <lineage>
        <taxon>Viruses</taxon>
        <taxon>Riboviria</taxon>
        <taxon>Orthornavirae</taxon>
        <taxon>Negarnaviricota</taxon>
        <taxon>Polyploviricotina</taxon>
        <taxon>Insthoviricetes</taxon>
        <taxon>Articulavirales</taxon>
        <taxon>Orthomyxoviridae</taxon>
        <taxon>Alphainfluenzavirus</taxon>
        <taxon>Alphainfluenzavirus influenzae</taxon>
        <taxon>Influenza A virus</taxon>
    </lineage>
</organism>
<comment type="function">
    <text evidence="1">Plays an important role in promoting lung pathology in both primary viral infection and secondary bacterial infection. Promotes alteration of mitochondrial morphology, dissipation of mitochondrial membrane potential, and cell death. Alternatively, inhibits the production of interferon in the infected cell at the level of host mitochondrial antiviral signaling MAVS. Its level of expression differs greatly depending on which cell type is infected, in a manner that is independent of the levels of expression of other viral proteins. Monocytic cells are more affected than epithelial cells. Seems to disable virus-infected monocytes or other host innate immune cells. During early stage of infection, predisposes the mitochondria to permeability transition through interaction with host SLC25A6/ANT3 and VDAC1. These proteins participate in the formation of the permeability transition pore complex (PTPC) responsible of the release of mitochondrial products that triggers apoptosis.</text>
</comment>
<comment type="subunit">
    <text evidence="1">Oligomer. Interacts with human SLC25A6/ANT3 and VDAC1. Interacts with host MAVS.</text>
</comment>
<comment type="subcellular location">
    <subcellularLocation>
        <location evidence="1">Host mitochondrion inner membrane</location>
    </subcellularLocation>
    <subcellularLocation>
        <location evidence="1">Host nucleus</location>
    </subcellularLocation>
    <subcellularLocation>
        <location evidence="1">Host cytoplasm</location>
        <location evidence="1">Host cytosol</location>
    </subcellularLocation>
    <text evidence="1">Inner mitochondrial membrane in most cells types. Otherwise is detected in the nucleus and cytosol.</text>
</comment>
<comment type="miscellaneous">
    <text>Is not encoded in all strains, and seems to be dispensable for replication.</text>
</comment>
<comment type="similarity">
    <text evidence="1">Belongs to the influenza viruses PB1-F2 family.</text>
</comment>
<feature type="chain" id="PRO_0000278714" description="Protein PB1-F2">
    <location>
        <begin position="1"/>
        <end position="90"/>
    </location>
</feature>
<feature type="region of interest" description="Disordered" evidence="2">
    <location>
        <begin position="1"/>
        <end position="31"/>
    </location>
</feature>
<feature type="region of interest" description="Mitochondrial targeting sequence" evidence="1">
    <location>
        <begin position="65"/>
        <end position="87"/>
    </location>
</feature>
<feature type="compositionally biased region" description="Polar residues" evidence="2">
    <location>
        <begin position="1"/>
        <end position="29"/>
    </location>
</feature>
<feature type="site" description="Low pathogenicity" evidence="1">
    <location>
        <position position="66"/>
    </location>
</feature>
<name>PB1F2_I78A7</name>
<accession>Q2VNE4</accession>